<reference key="1">
    <citation type="journal article" date="1986" name="Biol. Chem. Hoppe-Seyler">
        <title>The expression of alpha D-chains in the hemoglobin of adult ostrich (Struthio camelus) and American rhea (Rhea americana). The different evolution of adult bird alpha A-, alpha D- and beta-chains.</title>
        <authorList>
            <person name="Oberthur W."/>
            <person name="Godovac-Zimmermann J."/>
            <person name="Braunitzer G."/>
        </authorList>
    </citation>
    <scope>PROTEIN SEQUENCE</scope>
</reference>
<dbReference type="PIR" id="A02329">
    <property type="entry name" value="HAEHD"/>
</dbReference>
<dbReference type="SMR" id="P04241"/>
<dbReference type="GO" id="GO:0072562">
    <property type="term" value="C:blood microparticle"/>
    <property type="evidence" value="ECO:0007669"/>
    <property type="project" value="TreeGrafter"/>
</dbReference>
<dbReference type="GO" id="GO:0031838">
    <property type="term" value="C:haptoglobin-hemoglobin complex"/>
    <property type="evidence" value="ECO:0007669"/>
    <property type="project" value="TreeGrafter"/>
</dbReference>
<dbReference type="GO" id="GO:0005833">
    <property type="term" value="C:hemoglobin complex"/>
    <property type="evidence" value="ECO:0007669"/>
    <property type="project" value="InterPro"/>
</dbReference>
<dbReference type="GO" id="GO:0031720">
    <property type="term" value="F:haptoglobin binding"/>
    <property type="evidence" value="ECO:0007669"/>
    <property type="project" value="TreeGrafter"/>
</dbReference>
<dbReference type="GO" id="GO:0020037">
    <property type="term" value="F:heme binding"/>
    <property type="evidence" value="ECO:0007669"/>
    <property type="project" value="InterPro"/>
</dbReference>
<dbReference type="GO" id="GO:0005506">
    <property type="term" value="F:iron ion binding"/>
    <property type="evidence" value="ECO:0007669"/>
    <property type="project" value="InterPro"/>
</dbReference>
<dbReference type="GO" id="GO:0043177">
    <property type="term" value="F:organic acid binding"/>
    <property type="evidence" value="ECO:0007669"/>
    <property type="project" value="TreeGrafter"/>
</dbReference>
<dbReference type="GO" id="GO:0019825">
    <property type="term" value="F:oxygen binding"/>
    <property type="evidence" value="ECO:0007669"/>
    <property type="project" value="InterPro"/>
</dbReference>
<dbReference type="GO" id="GO:0005344">
    <property type="term" value="F:oxygen carrier activity"/>
    <property type="evidence" value="ECO:0007669"/>
    <property type="project" value="UniProtKB-KW"/>
</dbReference>
<dbReference type="GO" id="GO:0004601">
    <property type="term" value="F:peroxidase activity"/>
    <property type="evidence" value="ECO:0007669"/>
    <property type="project" value="TreeGrafter"/>
</dbReference>
<dbReference type="GO" id="GO:0042744">
    <property type="term" value="P:hydrogen peroxide catabolic process"/>
    <property type="evidence" value="ECO:0007669"/>
    <property type="project" value="TreeGrafter"/>
</dbReference>
<dbReference type="CDD" id="cd08927">
    <property type="entry name" value="Hb-alpha-like"/>
    <property type="match status" value="1"/>
</dbReference>
<dbReference type="FunFam" id="1.10.490.10:FF:000002">
    <property type="entry name" value="Hemoglobin subunit alpha"/>
    <property type="match status" value="1"/>
</dbReference>
<dbReference type="Gene3D" id="1.10.490.10">
    <property type="entry name" value="Globins"/>
    <property type="match status" value="1"/>
</dbReference>
<dbReference type="InterPro" id="IPR000971">
    <property type="entry name" value="Globin"/>
</dbReference>
<dbReference type="InterPro" id="IPR009050">
    <property type="entry name" value="Globin-like_sf"/>
</dbReference>
<dbReference type="InterPro" id="IPR012292">
    <property type="entry name" value="Globin/Proto"/>
</dbReference>
<dbReference type="InterPro" id="IPR002338">
    <property type="entry name" value="Hemoglobin_a-typ"/>
</dbReference>
<dbReference type="InterPro" id="IPR050056">
    <property type="entry name" value="Hemoglobin_oxygen_transport"/>
</dbReference>
<dbReference type="InterPro" id="IPR002339">
    <property type="entry name" value="Hemoglobin_pi"/>
</dbReference>
<dbReference type="PANTHER" id="PTHR11442">
    <property type="entry name" value="HEMOGLOBIN FAMILY MEMBER"/>
    <property type="match status" value="1"/>
</dbReference>
<dbReference type="PANTHER" id="PTHR11442:SF41">
    <property type="entry name" value="HEMOGLOBIN SUBUNIT ZETA"/>
    <property type="match status" value="1"/>
</dbReference>
<dbReference type="Pfam" id="PF00042">
    <property type="entry name" value="Globin"/>
    <property type="match status" value="1"/>
</dbReference>
<dbReference type="PRINTS" id="PR00612">
    <property type="entry name" value="ALPHAHAEM"/>
</dbReference>
<dbReference type="PRINTS" id="PR00815">
    <property type="entry name" value="PIHAEM"/>
</dbReference>
<dbReference type="SUPFAM" id="SSF46458">
    <property type="entry name" value="Globin-like"/>
    <property type="match status" value="1"/>
</dbReference>
<dbReference type="PROSITE" id="PS01033">
    <property type="entry name" value="GLOBIN"/>
    <property type="match status" value="1"/>
</dbReference>
<sequence>MLTADDKKLISQIWTKVAEHGGEFGGEALERMFITYPQTKTYFPHFDLHVGSEQVRGHGKKVVNALSNAVKNLDNLSQALAELSNLHAYNLRVDPVNFKLLSQCFQVVLAVHLGKEYTPEVHAAYDKFLSAVASVLAEKYR</sequence>
<accession>P04241</accession>
<proteinExistence type="evidence at protein level"/>
<comment type="function">
    <text>Involved in oxygen transport from the lung to the various peripheral tissues.</text>
</comment>
<comment type="subunit">
    <text>Heterotetramer of two alpha-D chains and two beta chains.</text>
</comment>
<comment type="tissue specificity">
    <text>Red blood cells.</text>
</comment>
<comment type="developmental stage">
    <text>In birds, the alpha-D chain occurs in a minor hemoglobin component, called hemoglobin d, which is expressed in late embryonic and adult life.</text>
</comment>
<comment type="similarity">
    <text evidence="1">Belongs to the globin family.</text>
</comment>
<keyword id="KW-0903">Direct protein sequencing</keyword>
<keyword id="KW-0349">Heme</keyword>
<keyword id="KW-0408">Iron</keyword>
<keyword id="KW-0479">Metal-binding</keyword>
<keyword id="KW-0561">Oxygen transport</keyword>
<keyword id="KW-0813">Transport</keyword>
<name>HBAD_RHEAM</name>
<organism>
    <name type="scientific">Rhea americana</name>
    <name type="common">Greater rhea</name>
    <name type="synonym">Common rhea</name>
    <dbReference type="NCBI Taxonomy" id="8797"/>
    <lineage>
        <taxon>Eukaryota</taxon>
        <taxon>Metazoa</taxon>
        <taxon>Chordata</taxon>
        <taxon>Craniata</taxon>
        <taxon>Vertebrata</taxon>
        <taxon>Euteleostomi</taxon>
        <taxon>Archelosauria</taxon>
        <taxon>Archosauria</taxon>
        <taxon>Dinosauria</taxon>
        <taxon>Saurischia</taxon>
        <taxon>Theropoda</taxon>
        <taxon>Coelurosauria</taxon>
        <taxon>Aves</taxon>
        <taxon>Palaeognathae</taxon>
        <taxon>Rheiformes</taxon>
        <taxon>Rheidae</taxon>
        <taxon>Rhea</taxon>
    </lineage>
</organism>
<evidence type="ECO:0000255" key="1">
    <source>
        <dbReference type="PROSITE-ProRule" id="PRU00238"/>
    </source>
</evidence>
<gene>
    <name type="primary">HBAD</name>
</gene>
<protein>
    <recommendedName>
        <fullName>Hemoglobin subunit alpha-D</fullName>
    </recommendedName>
    <alternativeName>
        <fullName>Alpha-D-globin</fullName>
    </alternativeName>
    <alternativeName>
        <fullName>Hemoglobin alpha-D chain</fullName>
    </alternativeName>
</protein>
<feature type="chain" id="PRO_0000052838" description="Hemoglobin subunit alpha-D">
    <location>
        <begin position="1"/>
        <end position="141"/>
    </location>
</feature>
<feature type="domain" description="Globin" evidence="1">
    <location>
        <begin position="1"/>
        <end position="141"/>
    </location>
</feature>
<feature type="binding site" description="distal binding residue">
    <location>
        <position position="58"/>
    </location>
    <ligand>
        <name>heme b</name>
        <dbReference type="ChEBI" id="CHEBI:60344"/>
    </ligand>
    <ligandPart>
        <name>Fe</name>
        <dbReference type="ChEBI" id="CHEBI:18248"/>
    </ligandPart>
</feature>
<feature type="binding site" description="proximal binding residue">
    <location>
        <position position="87"/>
    </location>
    <ligand>
        <name>heme b</name>
        <dbReference type="ChEBI" id="CHEBI:60344"/>
    </ligand>
    <ligandPart>
        <name>Fe</name>
        <dbReference type="ChEBI" id="CHEBI:18248"/>
    </ligandPart>
</feature>